<keyword id="KW-0028">Amino-acid biosynthesis</keyword>
<keyword id="KW-0057">Aromatic amino acid biosynthesis</keyword>
<keyword id="KW-0456">Lyase</keyword>
<keyword id="KW-0822">Tryptophan biosynthesis</keyword>
<comment type="function">
    <text evidence="1">The alpha subunit is responsible for the aldol cleavage of indoleglycerol phosphate to indole and glyceraldehyde 3-phosphate.</text>
</comment>
<comment type="catalytic activity">
    <reaction evidence="1">
        <text>(1S,2R)-1-C-(indol-3-yl)glycerol 3-phosphate + L-serine = D-glyceraldehyde 3-phosphate + L-tryptophan + H2O</text>
        <dbReference type="Rhea" id="RHEA:10532"/>
        <dbReference type="ChEBI" id="CHEBI:15377"/>
        <dbReference type="ChEBI" id="CHEBI:33384"/>
        <dbReference type="ChEBI" id="CHEBI:57912"/>
        <dbReference type="ChEBI" id="CHEBI:58866"/>
        <dbReference type="ChEBI" id="CHEBI:59776"/>
        <dbReference type="EC" id="4.2.1.20"/>
    </reaction>
</comment>
<comment type="pathway">
    <text evidence="1">Amino-acid biosynthesis; L-tryptophan biosynthesis; L-tryptophan from chorismate: step 5/5.</text>
</comment>
<comment type="subunit">
    <text evidence="1">Tetramer of two alpha and two beta chains.</text>
</comment>
<comment type="similarity">
    <text evidence="1">Belongs to the TrpA family.</text>
</comment>
<organism>
    <name type="scientific">Mycobacterium bovis (strain BCG / Pasteur 1173P2)</name>
    <dbReference type="NCBI Taxonomy" id="410289"/>
    <lineage>
        <taxon>Bacteria</taxon>
        <taxon>Bacillati</taxon>
        <taxon>Actinomycetota</taxon>
        <taxon>Actinomycetes</taxon>
        <taxon>Mycobacteriales</taxon>
        <taxon>Mycobacteriaceae</taxon>
        <taxon>Mycobacterium</taxon>
        <taxon>Mycobacterium tuberculosis complex</taxon>
    </lineage>
</organism>
<sequence length="270" mass="27728">MVAVEQSEASRLGPVFDSCRANNRAALIGYLPTGYPDVPASVAAMTALVESGCDIIEVGVPYSDPGMDGPTIARATEAALRGGVRVRDTLAAVEAISIAGGRAVVMTYWNPVLRYGVDAFARDLAAAGGLGLITPDLIPDEAQQWLAASEEHRLDRIFLVAPSSTPERLAATVEASRGFVYAASTMGVTGARDAVSQAAPELVGRVKAVSDIPVGVGLGVRSRAQAAQIAQYADGVIVGSALVTALTEGLPRLRALTGELAAGVRLGMSA</sequence>
<name>TRPA_MYCBP</name>
<gene>
    <name evidence="1" type="primary">trpA</name>
    <name type="ordered locus">BCG_1651</name>
</gene>
<evidence type="ECO:0000255" key="1">
    <source>
        <dbReference type="HAMAP-Rule" id="MF_00131"/>
    </source>
</evidence>
<dbReference type="EC" id="4.2.1.20" evidence="1"/>
<dbReference type="EMBL" id="AM408590">
    <property type="protein sequence ID" value="CAL71638.1"/>
    <property type="molecule type" value="Genomic_DNA"/>
</dbReference>
<dbReference type="RefSeq" id="WP_003407999.1">
    <property type="nucleotide sequence ID" value="NC_008769.1"/>
</dbReference>
<dbReference type="SMR" id="A1KJ29"/>
<dbReference type="GeneID" id="45425581"/>
<dbReference type="KEGG" id="mbb:BCG_1651"/>
<dbReference type="HOGENOM" id="CLU_016734_0_0_11"/>
<dbReference type="UniPathway" id="UPA00035">
    <property type="reaction ID" value="UER00044"/>
</dbReference>
<dbReference type="Proteomes" id="UP000001472">
    <property type="component" value="Chromosome"/>
</dbReference>
<dbReference type="GO" id="GO:0005829">
    <property type="term" value="C:cytosol"/>
    <property type="evidence" value="ECO:0007669"/>
    <property type="project" value="TreeGrafter"/>
</dbReference>
<dbReference type="GO" id="GO:0004834">
    <property type="term" value="F:tryptophan synthase activity"/>
    <property type="evidence" value="ECO:0007669"/>
    <property type="project" value="UniProtKB-UniRule"/>
</dbReference>
<dbReference type="CDD" id="cd04724">
    <property type="entry name" value="Tryptophan_synthase_alpha"/>
    <property type="match status" value="1"/>
</dbReference>
<dbReference type="FunFam" id="3.20.20.70:FF:000037">
    <property type="entry name" value="Tryptophan synthase alpha chain"/>
    <property type="match status" value="1"/>
</dbReference>
<dbReference type="Gene3D" id="3.20.20.70">
    <property type="entry name" value="Aldolase class I"/>
    <property type="match status" value="1"/>
</dbReference>
<dbReference type="HAMAP" id="MF_00131">
    <property type="entry name" value="Trp_synth_alpha"/>
    <property type="match status" value="1"/>
</dbReference>
<dbReference type="InterPro" id="IPR013785">
    <property type="entry name" value="Aldolase_TIM"/>
</dbReference>
<dbReference type="InterPro" id="IPR011060">
    <property type="entry name" value="RibuloseP-bd_barrel"/>
</dbReference>
<dbReference type="InterPro" id="IPR018204">
    <property type="entry name" value="Trp_synthase_alpha_AS"/>
</dbReference>
<dbReference type="InterPro" id="IPR002028">
    <property type="entry name" value="Trp_synthase_suA"/>
</dbReference>
<dbReference type="NCBIfam" id="TIGR00262">
    <property type="entry name" value="trpA"/>
    <property type="match status" value="1"/>
</dbReference>
<dbReference type="PANTHER" id="PTHR43406:SF1">
    <property type="entry name" value="TRYPTOPHAN SYNTHASE ALPHA CHAIN, CHLOROPLASTIC"/>
    <property type="match status" value="1"/>
</dbReference>
<dbReference type="PANTHER" id="PTHR43406">
    <property type="entry name" value="TRYPTOPHAN SYNTHASE, ALPHA CHAIN"/>
    <property type="match status" value="1"/>
</dbReference>
<dbReference type="Pfam" id="PF00290">
    <property type="entry name" value="Trp_syntA"/>
    <property type="match status" value="1"/>
</dbReference>
<dbReference type="SUPFAM" id="SSF51366">
    <property type="entry name" value="Ribulose-phoshate binding barrel"/>
    <property type="match status" value="1"/>
</dbReference>
<dbReference type="PROSITE" id="PS00167">
    <property type="entry name" value="TRP_SYNTHASE_ALPHA"/>
    <property type="match status" value="1"/>
</dbReference>
<protein>
    <recommendedName>
        <fullName evidence="1">Tryptophan synthase alpha chain</fullName>
        <ecNumber evidence="1">4.2.1.20</ecNumber>
    </recommendedName>
</protein>
<reference key="1">
    <citation type="journal article" date="2007" name="Proc. Natl. Acad. Sci. U.S.A.">
        <title>Genome plasticity of BCG and impact on vaccine efficacy.</title>
        <authorList>
            <person name="Brosch R."/>
            <person name="Gordon S.V."/>
            <person name="Garnier T."/>
            <person name="Eiglmeier K."/>
            <person name="Frigui W."/>
            <person name="Valenti P."/>
            <person name="Dos Santos S."/>
            <person name="Duthoy S."/>
            <person name="Lacroix C."/>
            <person name="Garcia-Pelayo C."/>
            <person name="Inwald J.K."/>
            <person name="Golby P."/>
            <person name="Garcia J.N."/>
            <person name="Hewinson R.G."/>
            <person name="Behr M.A."/>
            <person name="Quail M.A."/>
            <person name="Churcher C."/>
            <person name="Barrell B.G."/>
            <person name="Parkhill J."/>
            <person name="Cole S.T."/>
        </authorList>
    </citation>
    <scope>NUCLEOTIDE SEQUENCE [LARGE SCALE GENOMIC DNA]</scope>
    <source>
        <strain>BCG / Pasteur 1173P2</strain>
    </source>
</reference>
<proteinExistence type="inferred from homology"/>
<feature type="chain" id="PRO_1000018233" description="Tryptophan synthase alpha chain">
    <location>
        <begin position="1"/>
        <end position="270"/>
    </location>
</feature>
<feature type="active site" description="Proton acceptor" evidence="1">
    <location>
        <position position="57"/>
    </location>
</feature>
<feature type="active site" description="Proton acceptor" evidence="1">
    <location>
        <position position="68"/>
    </location>
</feature>
<accession>A1KJ29</accession>